<gene>
    <name type="primary">CRK8</name>
    <name type="ordered locus">At4g23160</name>
    <name type="ORF">F21P8.50</name>
</gene>
<sequence length="676" mass="75412">MYIVSMFGLAGLEALICFIFLFLFSFLTSFKASAQNPFYLNHDCPNRTTYSSNSTYSTNLKTLLSSFASRNASYSTGFQNIRAGQTPDRVTGLFLCRGDLSPEVCSNCVAFSVNESLTRCPNQREAVFYYEECILRYSHKNFLSTVTYEGELIMRNPNNISSIQNQRDQFIDLVQSNMNQAANEAANSSRKFSTIKTELTSLQTLYGLVQCTPDLARQDCFSCLTSSINRMMPLFRIGARQFWPSCNSRYELYAFYNETAIGTPSPPPLFPGSTPPLTSPSIPGKSGNSTVLVVAIVVLAVLLFIALVGYCFLAQRTKKTFDTASASEVGDDMATADSLQLDYRTIQTATNDFAESNKIGRGGFGEVYKGTFSNGKEVAVKRLSKNSRQGEAEFKTEVVVVAKLQHRNLVRLLGFSLQGEERILVYEYMPNKSLDCLLFDPTKQTQLDWMQRYNIIGGIARGILYLHQDSRLTIIHRDLKASNILLDADINPKIADFGMARIFGLDQTQDNTSRIVGTYGYMAPEYAMHGQFSMKSDVYSFGVLVLEIISGRKNSSFDESDGAQDLLTHTWRLWTNRTALDLVDPLIANNCQNSEVVRCIHIGLLCVQEDPAKRPTISTVFMMLTSNTVTLPVPRQPGFFIQSSPVKDPTDSDQSTTTKSTPASIDDELITDLYPR</sequence>
<protein>
    <recommendedName>
        <fullName>Cysteine-rich receptor-like protein kinase 8</fullName>
        <shortName>Cysteine-rich RLK8</shortName>
        <ecNumber>2.7.11.-</ecNumber>
    </recommendedName>
</protein>
<comment type="catalytic activity">
    <reaction>
        <text>L-seryl-[protein] + ATP = O-phospho-L-seryl-[protein] + ADP + H(+)</text>
        <dbReference type="Rhea" id="RHEA:17989"/>
        <dbReference type="Rhea" id="RHEA-COMP:9863"/>
        <dbReference type="Rhea" id="RHEA-COMP:11604"/>
        <dbReference type="ChEBI" id="CHEBI:15378"/>
        <dbReference type="ChEBI" id="CHEBI:29999"/>
        <dbReference type="ChEBI" id="CHEBI:30616"/>
        <dbReference type="ChEBI" id="CHEBI:83421"/>
        <dbReference type="ChEBI" id="CHEBI:456216"/>
    </reaction>
</comment>
<comment type="catalytic activity">
    <reaction>
        <text>L-threonyl-[protein] + ATP = O-phospho-L-threonyl-[protein] + ADP + H(+)</text>
        <dbReference type="Rhea" id="RHEA:46608"/>
        <dbReference type="Rhea" id="RHEA-COMP:11060"/>
        <dbReference type="Rhea" id="RHEA-COMP:11605"/>
        <dbReference type="ChEBI" id="CHEBI:15378"/>
        <dbReference type="ChEBI" id="CHEBI:30013"/>
        <dbReference type="ChEBI" id="CHEBI:30616"/>
        <dbReference type="ChEBI" id="CHEBI:61977"/>
        <dbReference type="ChEBI" id="CHEBI:456216"/>
    </reaction>
</comment>
<comment type="subcellular location">
    <subcellularLocation>
        <location evidence="7">Membrane</location>
        <topology evidence="7">Single-pass membrane protein</topology>
    </subcellularLocation>
</comment>
<comment type="similarity">
    <text evidence="3">Belongs to the protein kinase superfamily. Ser/Thr protein kinase family. CRK subfamily.</text>
</comment>
<comment type="sequence caution" evidence="7">
    <conflict type="erroneous gene model prediction">
        <sequence resource="EMBL-CDS" id="CAA18463"/>
    </conflict>
</comment>
<comment type="sequence caution" evidence="7">
    <conflict type="erroneous gene model prediction">
        <sequence resource="EMBL-CDS" id="CAB79271"/>
    </conflict>
</comment>
<dbReference type="EC" id="2.7.11.-"/>
<dbReference type="EMBL" id="AL022347">
    <property type="protein sequence ID" value="CAA18463.1"/>
    <property type="status" value="ALT_SEQ"/>
    <property type="molecule type" value="Genomic_DNA"/>
</dbReference>
<dbReference type="EMBL" id="AL161558">
    <property type="protein sequence ID" value="CAB79271.1"/>
    <property type="status" value="ALT_SEQ"/>
    <property type="molecule type" value="Genomic_DNA"/>
</dbReference>
<dbReference type="EMBL" id="CP002687">
    <property type="status" value="NOT_ANNOTATED_CDS"/>
    <property type="molecule type" value="Genomic_DNA"/>
</dbReference>
<dbReference type="PIR" id="T04833">
    <property type="entry name" value="T04833"/>
</dbReference>
<dbReference type="SMR" id="O65468"/>
<dbReference type="FunCoup" id="O65468">
    <property type="interactions" value="242"/>
</dbReference>
<dbReference type="STRING" id="3702.O65468"/>
<dbReference type="GlyCosmos" id="O65468">
    <property type="glycosylation" value="8 sites, No reported glycans"/>
</dbReference>
<dbReference type="GlyGen" id="O65468">
    <property type="glycosylation" value="8 sites"/>
</dbReference>
<dbReference type="PaxDb" id="3702-AT4G23160.1"/>
<dbReference type="ProteomicsDB" id="222768"/>
<dbReference type="Araport" id="AT4G23160"/>
<dbReference type="TAIR" id="AT4G23160">
    <property type="gene designation" value="CRK8"/>
</dbReference>
<dbReference type="eggNOG" id="KOG0017">
    <property type="taxonomic scope" value="Eukaryota"/>
</dbReference>
<dbReference type="HOGENOM" id="CLU_264771_0_0_1"/>
<dbReference type="InParanoid" id="O65468"/>
<dbReference type="PhylomeDB" id="O65468"/>
<dbReference type="PRO" id="PR:O65468"/>
<dbReference type="Proteomes" id="UP000006548">
    <property type="component" value="Chromosome 4"/>
</dbReference>
<dbReference type="ExpressionAtlas" id="O65468">
    <property type="expression patterns" value="baseline and differential"/>
</dbReference>
<dbReference type="GO" id="GO:0005886">
    <property type="term" value="C:plasma membrane"/>
    <property type="evidence" value="ECO:0000318"/>
    <property type="project" value="GO_Central"/>
</dbReference>
<dbReference type="GO" id="GO:0005524">
    <property type="term" value="F:ATP binding"/>
    <property type="evidence" value="ECO:0007669"/>
    <property type="project" value="UniProtKB-KW"/>
</dbReference>
<dbReference type="GO" id="GO:0106310">
    <property type="term" value="F:protein serine kinase activity"/>
    <property type="evidence" value="ECO:0007669"/>
    <property type="project" value="RHEA"/>
</dbReference>
<dbReference type="GO" id="GO:0004674">
    <property type="term" value="F:protein serine/threonine kinase activity"/>
    <property type="evidence" value="ECO:0000318"/>
    <property type="project" value="GO_Central"/>
</dbReference>
<dbReference type="GO" id="GO:0042742">
    <property type="term" value="P:defense response to bacterium"/>
    <property type="evidence" value="ECO:0000318"/>
    <property type="project" value="GO_Central"/>
</dbReference>
<dbReference type="GO" id="GO:0009626">
    <property type="term" value="P:plant-type hypersensitive response"/>
    <property type="evidence" value="ECO:0000318"/>
    <property type="project" value="GO_Central"/>
</dbReference>
<dbReference type="GO" id="GO:0007165">
    <property type="term" value="P:signal transduction"/>
    <property type="evidence" value="ECO:0000318"/>
    <property type="project" value="GO_Central"/>
</dbReference>
<dbReference type="CDD" id="cd23509">
    <property type="entry name" value="Gnk2-like"/>
    <property type="match status" value="2"/>
</dbReference>
<dbReference type="CDD" id="cd14066">
    <property type="entry name" value="STKc_IRAK"/>
    <property type="match status" value="1"/>
</dbReference>
<dbReference type="FunFam" id="3.30.200.20:FF:000142">
    <property type="entry name" value="Cysteine-rich receptor-like protein kinase 10"/>
    <property type="match status" value="1"/>
</dbReference>
<dbReference type="FunFam" id="3.30.430.20:FF:000002">
    <property type="entry name" value="Cysteine-rich receptor-like protein kinase 10"/>
    <property type="match status" value="1"/>
</dbReference>
<dbReference type="FunFam" id="1.10.510.10:FF:000129">
    <property type="entry name" value="cysteine-rich receptor-like protein kinase 10"/>
    <property type="match status" value="1"/>
</dbReference>
<dbReference type="FunFam" id="3.30.430.20:FF:000003">
    <property type="entry name" value="Cysteine-rich RLK (RECEPTOR-like protein kinase) 10"/>
    <property type="match status" value="1"/>
</dbReference>
<dbReference type="Gene3D" id="3.30.430.20">
    <property type="entry name" value="Gnk2 domain, C-X8-C-X2-C motif"/>
    <property type="match status" value="2"/>
</dbReference>
<dbReference type="Gene3D" id="3.30.200.20">
    <property type="entry name" value="Phosphorylase Kinase, domain 1"/>
    <property type="match status" value="1"/>
</dbReference>
<dbReference type="Gene3D" id="1.10.510.10">
    <property type="entry name" value="Transferase(Phosphotransferase) domain 1"/>
    <property type="match status" value="1"/>
</dbReference>
<dbReference type="InterPro" id="IPR054603">
    <property type="entry name" value="CR_prot_dom_plant"/>
</dbReference>
<dbReference type="InterPro" id="IPR002902">
    <property type="entry name" value="GNK2"/>
</dbReference>
<dbReference type="InterPro" id="IPR038408">
    <property type="entry name" value="GNK2_sf"/>
</dbReference>
<dbReference type="InterPro" id="IPR011009">
    <property type="entry name" value="Kinase-like_dom_sf"/>
</dbReference>
<dbReference type="InterPro" id="IPR000719">
    <property type="entry name" value="Prot_kinase_dom"/>
</dbReference>
<dbReference type="InterPro" id="IPR017441">
    <property type="entry name" value="Protein_kinase_ATP_BS"/>
</dbReference>
<dbReference type="InterPro" id="IPR008271">
    <property type="entry name" value="Ser/Thr_kinase_AS"/>
</dbReference>
<dbReference type="PANTHER" id="PTHR27002:SF1001">
    <property type="entry name" value="CYSTEINE-RICH RECEPTOR-LIKE PROTEIN KINASE 10-RELATED"/>
    <property type="match status" value="1"/>
</dbReference>
<dbReference type="PANTHER" id="PTHR27002">
    <property type="entry name" value="RECEPTOR-LIKE SERINE/THREONINE-PROTEIN KINASE SD1-8"/>
    <property type="match status" value="1"/>
</dbReference>
<dbReference type="Pfam" id="PF22812">
    <property type="entry name" value="CR_prot_dom_plant"/>
    <property type="match status" value="1"/>
</dbReference>
<dbReference type="Pfam" id="PF00069">
    <property type="entry name" value="Pkinase"/>
    <property type="match status" value="1"/>
</dbReference>
<dbReference type="Pfam" id="PF01657">
    <property type="entry name" value="Stress-antifung"/>
    <property type="match status" value="2"/>
</dbReference>
<dbReference type="SMART" id="SM00220">
    <property type="entry name" value="S_TKc"/>
    <property type="match status" value="1"/>
</dbReference>
<dbReference type="SUPFAM" id="SSF56112">
    <property type="entry name" value="Protein kinase-like (PK-like)"/>
    <property type="match status" value="1"/>
</dbReference>
<dbReference type="PROSITE" id="PS51473">
    <property type="entry name" value="GNK2"/>
    <property type="match status" value="2"/>
</dbReference>
<dbReference type="PROSITE" id="PS00107">
    <property type="entry name" value="PROTEIN_KINASE_ATP"/>
    <property type="match status" value="1"/>
</dbReference>
<dbReference type="PROSITE" id="PS50011">
    <property type="entry name" value="PROTEIN_KINASE_DOM"/>
    <property type="match status" value="1"/>
</dbReference>
<dbReference type="PROSITE" id="PS00108">
    <property type="entry name" value="PROTEIN_KINASE_ST"/>
    <property type="match status" value="1"/>
</dbReference>
<reference key="1">
    <citation type="journal article" date="1999" name="Nature">
        <title>Sequence and analysis of chromosome 4 of the plant Arabidopsis thaliana.</title>
        <authorList>
            <person name="Mayer K.F.X."/>
            <person name="Schueller C."/>
            <person name="Wambutt R."/>
            <person name="Murphy G."/>
            <person name="Volckaert G."/>
            <person name="Pohl T."/>
            <person name="Duesterhoeft A."/>
            <person name="Stiekema W."/>
            <person name="Entian K.-D."/>
            <person name="Terryn N."/>
            <person name="Harris B."/>
            <person name="Ansorge W."/>
            <person name="Brandt P."/>
            <person name="Grivell L.A."/>
            <person name="Rieger M."/>
            <person name="Weichselgartner M."/>
            <person name="de Simone V."/>
            <person name="Obermaier B."/>
            <person name="Mache R."/>
            <person name="Mueller M."/>
            <person name="Kreis M."/>
            <person name="Delseny M."/>
            <person name="Puigdomenech P."/>
            <person name="Watson M."/>
            <person name="Schmidtheini T."/>
            <person name="Reichert B."/>
            <person name="Portetelle D."/>
            <person name="Perez-Alonso M."/>
            <person name="Boutry M."/>
            <person name="Bancroft I."/>
            <person name="Vos P."/>
            <person name="Hoheisel J."/>
            <person name="Zimmermann W."/>
            <person name="Wedler H."/>
            <person name="Ridley P."/>
            <person name="Langham S.-A."/>
            <person name="McCullagh B."/>
            <person name="Bilham L."/>
            <person name="Robben J."/>
            <person name="van der Schueren J."/>
            <person name="Grymonprez B."/>
            <person name="Chuang Y.-J."/>
            <person name="Vandenbussche F."/>
            <person name="Braeken M."/>
            <person name="Weltjens I."/>
            <person name="Voet M."/>
            <person name="Bastiaens I."/>
            <person name="Aert R."/>
            <person name="Defoor E."/>
            <person name="Weitzenegger T."/>
            <person name="Bothe G."/>
            <person name="Ramsperger U."/>
            <person name="Hilbert H."/>
            <person name="Braun M."/>
            <person name="Holzer E."/>
            <person name="Brandt A."/>
            <person name="Peters S."/>
            <person name="van Staveren M."/>
            <person name="Dirkse W."/>
            <person name="Mooijman P."/>
            <person name="Klein Lankhorst R."/>
            <person name="Rose M."/>
            <person name="Hauf J."/>
            <person name="Koetter P."/>
            <person name="Berneiser S."/>
            <person name="Hempel S."/>
            <person name="Feldpausch M."/>
            <person name="Lamberth S."/>
            <person name="Van den Daele H."/>
            <person name="De Keyser A."/>
            <person name="Buysshaert C."/>
            <person name="Gielen J."/>
            <person name="Villarroel R."/>
            <person name="De Clercq R."/>
            <person name="van Montagu M."/>
            <person name="Rogers J."/>
            <person name="Cronin A."/>
            <person name="Quail M.A."/>
            <person name="Bray-Allen S."/>
            <person name="Clark L."/>
            <person name="Doggett J."/>
            <person name="Hall S."/>
            <person name="Kay M."/>
            <person name="Lennard N."/>
            <person name="McLay K."/>
            <person name="Mayes R."/>
            <person name="Pettett A."/>
            <person name="Rajandream M.A."/>
            <person name="Lyne M."/>
            <person name="Benes V."/>
            <person name="Rechmann S."/>
            <person name="Borkova D."/>
            <person name="Bloecker H."/>
            <person name="Scharfe M."/>
            <person name="Grimm M."/>
            <person name="Loehnert T.-H."/>
            <person name="Dose S."/>
            <person name="de Haan M."/>
            <person name="Maarse A.C."/>
            <person name="Schaefer M."/>
            <person name="Mueller-Auer S."/>
            <person name="Gabel C."/>
            <person name="Fuchs M."/>
            <person name="Fartmann B."/>
            <person name="Granderath K."/>
            <person name="Dauner D."/>
            <person name="Herzl A."/>
            <person name="Neumann S."/>
            <person name="Argiriou A."/>
            <person name="Vitale D."/>
            <person name="Liguori R."/>
            <person name="Piravandi E."/>
            <person name="Massenet O."/>
            <person name="Quigley F."/>
            <person name="Clabauld G."/>
            <person name="Muendlein A."/>
            <person name="Felber R."/>
            <person name="Schnabl S."/>
            <person name="Hiller R."/>
            <person name="Schmidt W."/>
            <person name="Lecharny A."/>
            <person name="Aubourg S."/>
            <person name="Chefdor F."/>
            <person name="Cooke R."/>
            <person name="Berger C."/>
            <person name="Monfort A."/>
            <person name="Casacuberta E."/>
            <person name="Gibbons T."/>
            <person name="Weber N."/>
            <person name="Vandenbol M."/>
            <person name="Bargues M."/>
            <person name="Terol J."/>
            <person name="Torres A."/>
            <person name="Perez-Perez A."/>
            <person name="Purnelle B."/>
            <person name="Bent E."/>
            <person name="Johnson S."/>
            <person name="Tacon D."/>
            <person name="Jesse T."/>
            <person name="Heijnen L."/>
            <person name="Schwarz S."/>
            <person name="Scholler P."/>
            <person name="Heber S."/>
            <person name="Francs P."/>
            <person name="Bielke C."/>
            <person name="Frishman D."/>
            <person name="Haase D."/>
            <person name="Lemcke K."/>
            <person name="Mewes H.-W."/>
            <person name="Stocker S."/>
            <person name="Zaccaria P."/>
            <person name="Bevan M."/>
            <person name="Wilson R.K."/>
            <person name="de la Bastide M."/>
            <person name="Habermann K."/>
            <person name="Parnell L."/>
            <person name="Dedhia N."/>
            <person name="Gnoj L."/>
            <person name="Schutz K."/>
            <person name="Huang E."/>
            <person name="Spiegel L."/>
            <person name="Sekhon M."/>
            <person name="Murray J."/>
            <person name="Sheet P."/>
            <person name="Cordes M."/>
            <person name="Abu-Threideh J."/>
            <person name="Stoneking T."/>
            <person name="Kalicki J."/>
            <person name="Graves T."/>
            <person name="Harmon G."/>
            <person name="Edwards J."/>
            <person name="Latreille P."/>
            <person name="Courtney L."/>
            <person name="Cloud J."/>
            <person name="Abbott A."/>
            <person name="Scott K."/>
            <person name="Johnson D."/>
            <person name="Minx P."/>
            <person name="Bentley D."/>
            <person name="Fulton B."/>
            <person name="Miller N."/>
            <person name="Greco T."/>
            <person name="Kemp K."/>
            <person name="Kramer J."/>
            <person name="Fulton L."/>
            <person name="Mardis E."/>
            <person name="Dante M."/>
            <person name="Pepin K."/>
            <person name="Hillier L.W."/>
            <person name="Nelson J."/>
            <person name="Spieth J."/>
            <person name="Ryan E."/>
            <person name="Andrews S."/>
            <person name="Geisel C."/>
            <person name="Layman D."/>
            <person name="Du H."/>
            <person name="Ali J."/>
            <person name="Berghoff A."/>
            <person name="Jones K."/>
            <person name="Drone K."/>
            <person name="Cotton M."/>
            <person name="Joshu C."/>
            <person name="Antonoiu B."/>
            <person name="Zidanic M."/>
            <person name="Strong C."/>
            <person name="Sun H."/>
            <person name="Lamar B."/>
            <person name="Yordan C."/>
            <person name="Ma P."/>
            <person name="Zhong J."/>
            <person name="Preston R."/>
            <person name="Vil D."/>
            <person name="Shekher M."/>
            <person name="Matero A."/>
            <person name="Shah R."/>
            <person name="Swaby I.K."/>
            <person name="O'Shaughnessy A."/>
            <person name="Rodriguez M."/>
            <person name="Hoffman J."/>
            <person name="Till S."/>
            <person name="Granat S."/>
            <person name="Shohdy N."/>
            <person name="Hasegawa A."/>
            <person name="Hameed A."/>
            <person name="Lodhi M."/>
            <person name="Johnson A."/>
            <person name="Chen E."/>
            <person name="Marra M.A."/>
            <person name="Martienssen R."/>
            <person name="McCombie W.R."/>
        </authorList>
    </citation>
    <scope>NUCLEOTIDE SEQUENCE [LARGE SCALE GENOMIC DNA]</scope>
    <source>
        <strain>cv. Columbia</strain>
    </source>
</reference>
<reference key="2">
    <citation type="journal article" date="2017" name="Plant J.">
        <title>Araport11: a complete reannotation of the Arabidopsis thaliana reference genome.</title>
        <authorList>
            <person name="Cheng C.Y."/>
            <person name="Krishnakumar V."/>
            <person name="Chan A.P."/>
            <person name="Thibaud-Nissen F."/>
            <person name="Schobel S."/>
            <person name="Town C.D."/>
        </authorList>
    </citation>
    <scope>GENOME REANNOTATION</scope>
    <source>
        <strain>cv. Columbia</strain>
    </source>
</reference>
<reference key="3">
    <citation type="journal article" date="2001" name="Plant Physiol.">
        <title>A superfamily of proteins with novel cysteine-rich repeats.</title>
        <authorList>
            <person name="Chen Z."/>
        </authorList>
    </citation>
    <scope>GENE FAMILY ORGANIZATION</scope>
    <scope>NOMENCLATURE</scope>
</reference>
<proteinExistence type="inferred from homology"/>
<organism>
    <name type="scientific">Arabidopsis thaliana</name>
    <name type="common">Mouse-ear cress</name>
    <dbReference type="NCBI Taxonomy" id="3702"/>
    <lineage>
        <taxon>Eukaryota</taxon>
        <taxon>Viridiplantae</taxon>
        <taxon>Streptophyta</taxon>
        <taxon>Embryophyta</taxon>
        <taxon>Tracheophyta</taxon>
        <taxon>Spermatophyta</taxon>
        <taxon>Magnoliopsida</taxon>
        <taxon>eudicotyledons</taxon>
        <taxon>Gunneridae</taxon>
        <taxon>Pentapetalae</taxon>
        <taxon>rosids</taxon>
        <taxon>malvids</taxon>
        <taxon>Brassicales</taxon>
        <taxon>Brassicaceae</taxon>
        <taxon>Camelineae</taxon>
        <taxon>Arabidopsis</taxon>
    </lineage>
</organism>
<keyword id="KW-0067">ATP-binding</keyword>
<keyword id="KW-0325">Glycoprotein</keyword>
<keyword id="KW-0418">Kinase</keyword>
<keyword id="KW-0472">Membrane</keyword>
<keyword id="KW-0547">Nucleotide-binding</keyword>
<keyword id="KW-0597">Phosphoprotein</keyword>
<keyword id="KW-0675">Receptor</keyword>
<keyword id="KW-1185">Reference proteome</keyword>
<keyword id="KW-0677">Repeat</keyword>
<keyword id="KW-0723">Serine/threonine-protein kinase</keyword>
<keyword id="KW-0732">Signal</keyword>
<keyword id="KW-0808">Transferase</keyword>
<keyword id="KW-0812">Transmembrane</keyword>
<keyword id="KW-1133">Transmembrane helix</keyword>
<accession>O65468</accession>
<accession>F4JMT4</accession>
<name>CRK8_ARATH</name>
<evidence type="ECO:0000250" key="1">
    <source>
        <dbReference type="UniProtKB" id="O48814"/>
    </source>
</evidence>
<evidence type="ECO:0000255" key="2"/>
<evidence type="ECO:0000255" key="3">
    <source>
        <dbReference type="PROSITE-ProRule" id="PRU00159"/>
    </source>
</evidence>
<evidence type="ECO:0000255" key="4">
    <source>
        <dbReference type="PROSITE-ProRule" id="PRU00806"/>
    </source>
</evidence>
<evidence type="ECO:0000255" key="5">
    <source>
        <dbReference type="PROSITE-ProRule" id="PRU10027"/>
    </source>
</evidence>
<evidence type="ECO:0000256" key="6">
    <source>
        <dbReference type="SAM" id="MobiDB-lite"/>
    </source>
</evidence>
<evidence type="ECO:0000305" key="7"/>
<feature type="signal peptide" evidence="2">
    <location>
        <begin position="1"/>
        <end position="34"/>
    </location>
</feature>
<feature type="chain" id="PRO_0000295055" description="Cysteine-rich receptor-like protein kinase 8">
    <location>
        <begin position="35"/>
        <end position="676"/>
    </location>
</feature>
<feature type="topological domain" description="Extracellular" evidence="2">
    <location>
        <begin position="35"/>
        <end position="291"/>
    </location>
</feature>
<feature type="transmembrane region" description="Helical" evidence="2">
    <location>
        <begin position="292"/>
        <end position="312"/>
    </location>
</feature>
<feature type="topological domain" description="Cytoplasmic" evidence="2">
    <location>
        <begin position="313"/>
        <end position="676"/>
    </location>
</feature>
<feature type="domain" description="Gnk2-homologous 1" evidence="4">
    <location>
        <begin position="38"/>
        <end position="142"/>
    </location>
</feature>
<feature type="domain" description="Gnk2-homologous 2" evidence="4">
    <location>
        <begin position="151"/>
        <end position="255"/>
    </location>
</feature>
<feature type="domain" description="Protein kinase" evidence="3">
    <location>
        <begin position="353"/>
        <end position="639"/>
    </location>
</feature>
<feature type="region of interest" description="Disordered" evidence="6">
    <location>
        <begin position="640"/>
        <end position="666"/>
    </location>
</feature>
<feature type="compositionally biased region" description="Low complexity" evidence="6">
    <location>
        <begin position="652"/>
        <end position="662"/>
    </location>
</feature>
<feature type="active site" description="Proton acceptor" evidence="3 5">
    <location>
        <position position="478"/>
    </location>
</feature>
<feature type="binding site" evidence="3">
    <location>
        <begin position="359"/>
        <end position="367"/>
    </location>
    <ligand>
        <name>ATP</name>
        <dbReference type="ChEBI" id="CHEBI:30616"/>
    </ligand>
</feature>
<feature type="binding site" evidence="3">
    <location>
        <position position="381"/>
    </location>
    <ligand>
        <name>ATP</name>
        <dbReference type="ChEBI" id="CHEBI:30616"/>
    </ligand>
</feature>
<feature type="modified residue" description="Phosphotyrosine" evidence="1">
    <location>
        <position position="426"/>
    </location>
</feature>
<feature type="modified residue" description="Phosphoserine" evidence="1">
    <location>
        <position position="482"/>
    </location>
</feature>
<feature type="modified residue" description="Phosphothreonine" evidence="1">
    <location>
        <position position="518"/>
    </location>
</feature>
<feature type="modified residue" description="Phosphotyrosine" evidence="1">
    <location>
        <position position="526"/>
    </location>
</feature>
<feature type="glycosylation site" description="N-linked (GlcNAc...) asparagine" evidence="2">
    <location>
        <position position="46"/>
    </location>
</feature>
<feature type="glycosylation site" description="N-linked (GlcNAc...) asparagine" evidence="2">
    <location>
        <position position="53"/>
    </location>
</feature>
<feature type="glycosylation site" description="N-linked (GlcNAc...) asparagine" evidence="2">
    <location>
        <position position="71"/>
    </location>
</feature>
<feature type="glycosylation site" description="N-linked (GlcNAc...) asparagine" evidence="2">
    <location>
        <position position="114"/>
    </location>
</feature>
<feature type="glycosylation site" description="N-linked (GlcNAc...) asparagine" evidence="2">
    <location>
        <position position="159"/>
    </location>
</feature>
<feature type="glycosylation site" description="N-linked (GlcNAc...) asparagine" evidence="2">
    <location>
        <position position="187"/>
    </location>
</feature>
<feature type="glycosylation site" description="N-linked (GlcNAc...) asparagine" evidence="2">
    <location>
        <position position="257"/>
    </location>
</feature>
<feature type="glycosylation site" description="N-linked (GlcNAc...) asparagine" evidence="2">
    <location>
        <position position="288"/>
    </location>
</feature>